<keyword id="KW-0249">Electron transport</keyword>
<keyword id="KW-0472">Membrane</keyword>
<keyword id="KW-0496">Mitochondrion</keyword>
<keyword id="KW-0999">Mitochondrion inner membrane</keyword>
<keyword id="KW-0520">NAD</keyword>
<keyword id="KW-1185">Reference proteome</keyword>
<keyword id="KW-0679">Respiratory chain</keyword>
<keyword id="KW-1278">Translocase</keyword>
<keyword id="KW-0812">Transmembrane</keyword>
<keyword id="KW-1133">Transmembrane helix</keyword>
<keyword id="KW-0813">Transport</keyword>
<keyword id="KW-0830">Ubiquinone</keyword>
<geneLocation type="mitochondrion"/>
<proteinExistence type="inferred from homology"/>
<reference key="1">
    <citation type="submission" date="2004-10" db="EMBL/GenBank/DDBJ databases">
        <title>Complete sequence of the Yak (Bos grunniens.) mitochondrial genome and its genetic relationship with related species.</title>
        <authorList>
            <person name="Gu Z."/>
            <person name="Zhao X."/>
            <person name="Li N."/>
            <person name="Wu C."/>
        </authorList>
    </citation>
    <scope>NUCLEOTIDE SEQUENCE [GENOMIC DNA]</scope>
</reference>
<dbReference type="EC" id="7.1.1.2" evidence="1"/>
<dbReference type="EMBL" id="AY684273">
    <property type="protein sequence ID" value="AAU89113.1"/>
    <property type="molecule type" value="Genomic_DNA"/>
</dbReference>
<dbReference type="RefSeq" id="YP_001218798.1">
    <property type="nucleotide sequence ID" value="NC_006380.3"/>
</dbReference>
<dbReference type="SMR" id="Q5Y4Q3"/>
<dbReference type="GeneID" id="3119747"/>
<dbReference type="CTD" id="4537"/>
<dbReference type="Proteomes" id="UP000694520">
    <property type="component" value="Unplaced"/>
</dbReference>
<dbReference type="GO" id="GO:0005743">
    <property type="term" value="C:mitochondrial inner membrane"/>
    <property type="evidence" value="ECO:0000250"/>
    <property type="project" value="UniProtKB"/>
</dbReference>
<dbReference type="GO" id="GO:0030964">
    <property type="term" value="C:NADH dehydrogenase complex"/>
    <property type="evidence" value="ECO:0007669"/>
    <property type="project" value="TreeGrafter"/>
</dbReference>
<dbReference type="GO" id="GO:0008137">
    <property type="term" value="F:NADH dehydrogenase (ubiquinone) activity"/>
    <property type="evidence" value="ECO:0000250"/>
    <property type="project" value="UniProtKB"/>
</dbReference>
<dbReference type="GO" id="GO:0006120">
    <property type="term" value="P:mitochondrial electron transport, NADH to ubiquinone"/>
    <property type="evidence" value="ECO:0000250"/>
    <property type="project" value="UniProtKB"/>
</dbReference>
<dbReference type="FunFam" id="1.20.58.1610:FF:000004">
    <property type="entry name" value="NADH-quinone oxidoreductase subunit A"/>
    <property type="match status" value="1"/>
</dbReference>
<dbReference type="Gene3D" id="1.20.58.1610">
    <property type="entry name" value="NADH:ubiquinone/plastoquinone oxidoreductase, chain 3"/>
    <property type="match status" value="1"/>
</dbReference>
<dbReference type="InterPro" id="IPR000440">
    <property type="entry name" value="NADH_UbQ/plastoQ_OxRdtase_su3"/>
</dbReference>
<dbReference type="InterPro" id="IPR038430">
    <property type="entry name" value="NDAH_ubi_oxred_su3_sf"/>
</dbReference>
<dbReference type="PANTHER" id="PTHR11058">
    <property type="entry name" value="NADH-UBIQUINONE OXIDOREDUCTASE CHAIN 3"/>
    <property type="match status" value="1"/>
</dbReference>
<dbReference type="PANTHER" id="PTHR11058:SF9">
    <property type="entry name" value="NADH-UBIQUINONE OXIDOREDUCTASE CHAIN 3"/>
    <property type="match status" value="1"/>
</dbReference>
<dbReference type="Pfam" id="PF00507">
    <property type="entry name" value="Oxidored_q4"/>
    <property type="match status" value="1"/>
</dbReference>
<organism>
    <name type="scientific">Bos mutus grunniens</name>
    <name type="common">Wild yak</name>
    <name type="synonym">Bos grunniens</name>
    <dbReference type="NCBI Taxonomy" id="30521"/>
    <lineage>
        <taxon>Eukaryota</taxon>
        <taxon>Metazoa</taxon>
        <taxon>Chordata</taxon>
        <taxon>Craniata</taxon>
        <taxon>Vertebrata</taxon>
        <taxon>Euteleostomi</taxon>
        <taxon>Mammalia</taxon>
        <taxon>Eutheria</taxon>
        <taxon>Laurasiatheria</taxon>
        <taxon>Artiodactyla</taxon>
        <taxon>Ruminantia</taxon>
        <taxon>Pecora</taxon>
        <taxon>Bovidae</taxon>
        <taxon>Bovinae</taxon>
        <taxon>Bos</taxon>
    </lineage>
</organism>
<evidence type="ECO:0000250" key="1">
    <source>
        <dbReference type="UniProtKB" id="P03897"/>
    </source>
</evidence>
<evidence type="ECO:0000250" key="2">
    <source>
        <dbReference type="UniProtKB" id="P03898"/>
    </source>
</evidence>
<evidence type="ECO:0000255" key="3"/>
<evidence type="ECO:0000305" key="4"/>
<feature type="chain" id="PRO_0000253519" description="NADH-ubiquinone oxidoreductase chain 3">
    <location>
        <begin position="1"/>
        <end position="115"/>
    </location>
</feature>
<feature type="transmembrane region" description="Helical" evidence="3">
    <location>
        <begin position="3"/>
        <end position="23"/>
    </location>
</feature>
<feature type="transmembrane region" description="Helical" evidence="3">
    <location>
        <begin position="55"/>
        <end position="75"/>
    </location>
</feature>
<feature type="transmembrane region" description="Helical" evidence="3">
    <location>
        <begin position="84"/>
        <end position="104"/>
    </location>
</feature>
<comment type="function">
    <text evidence="1">Core subunit of the mitochondrial membrane respiratory chain NADH dehydrogenase (Complex I) which catalyzes electron transfer from NADH through the respiratory chain, using ubiquinone as an electron acceptor. Essential for the catalytic activity of complex I.</text>
</comment>
<comment type="catalytic activity">
    <reaction evidence="1">
        <text>a ubiquinone + NADH + 5 H(+)(in) = a ubiquinol + NAD(+) + 4 H(+)(out)</text>
        <dbReference type="Rhea" id="RHEA:29091"/>
        <dbReference type="Rhea" id="RHEA-COMP:9565"/>
        <dbReference type="Rhea" id="RHEA-COMP:9566"/>
        <dbReference type="ChEBI" id="CHEBI:15378"/>
        <dbReference type="ChEBI" id="CHEBI:16389"/>
        <dbReference type="ChEBI" id="CHEBI:17976"/>
        <dbReference type="ChEBI" id="CHEBI:57540"/>
        <dbReference type="ChEBI" id="CHEBI:57945"/>
        <dbReference type="EC" id="7.1.1.2"/>
    </reaction>
</comment>
<comment type="subunit">
    <text evidence="1">Core subunit of respiratory chain NADH dehydrogenase (Complex I) which is composed of 45 different subunits. Interacts with TMEM186. Interacts with TMEM242 (By similarity).</text>
</comment>
<comment type="subcellular location">
    <subcellularLocation>
        <location evidence="2">Mitochondrion inner membrane</location>
        <topology evidence="3">Multi-pass membrane protein</topology>
    </subcellularLocation>
</comment>
<comment type="similarity">
    <text evidence="4">Belongs to the complex I subunit 3 family.</text>
</comment>
<sequence length="115" mass="13085">MNLMLALLTNFTLATLLVIIAFWLPQLNVYSEKTSPYECGFDPMGSARLPFSMKFFLVAITFLLFDLEIALLLPLPWASQTTNLNTMLTMALFLIILLAVSLAYEWTQKGLEWTE</sequence>
<protein>
    <recommendedName>
        <fullName evidence="1">NADH-ubiquinone oxidoreductase chain 3</fullName>
        <ecNumber evidence="1">7.1.1.2</ecNumber>
    </recommendedName>
    <alternativeName>
        <fullName>NADH dehydrogenase subunit 3</fullName>
    </alternativeName>
</protein>
<name>NU3M_BOSMU</name>
<gene>
    <name evidence="1" type="primary">MT-ND3</name>
    <name type="synonym">MTND3</name>
    <name type="synonym">NADH3</name>
    <name type="synonym">ND3</name>
</gene>
<accession>Q5Y4Q3</accession>